<accession>A1S6H2</accession>
<gene>
    <name evidence="1" type="primary">lolA</name>
    <name type="ordered locus">Sama_1773</name>
</gene>
<sequence length="203" mass="22603">MKKSIVVLFSAVLPFAVFADDAKELVSKLDVMQGIKANFSQKVTDQNGKLIQEGSGVIAMHQPDAFYWHLTAPDESLIVAKDNSVWVYNPFAEEVSILDMEDILKASPMALLVHRDEKRWNEYQIDRKGSCFDITPRQGVESAVDTVSVCFANNTLSDIRLTDAQGSTSHFSLSEQAAVTDADESLFQFQIPDGVSIDDQRRQ</sequence>
<comment type="function">
    <text evidence="1">Participates in the translocation of lipoproteins from the inner membrane to the outer membrane. Only forms a complex with a lipoprotein if the residue after the N-terminal Cys is not an aspartate (The Asp acts as a targeting signal to indicate that the lipoprotein should stay in the inner membrane).</text>
</comment>
<comment type="subunit">
    <text evidence="1">Monomer.</text>
</comment>
<comment type="subcellular location">
    <subcellularLocation>
        <location evidence="1">Periplasm</location>
    </subcellularLocation>
</comment>
<comment type="similarity">
    <text evidence="1">Belongs to the LolA family.</text>
</comment>
<keyword id="KW-0143">Chaperone</keyword>
<keyword id="KW-0574">Periplasm</keyword>
<keyword id="KW-0653">Protein transport</keyword>
<keyword id="KW-1185">Reference proteome</keyword>
<keyword id="KW-0732">Signal</keyword>
<keyword id="KW-0813">Transport</keyword>
<reference key="1">
    <citation type="submission" date="2006-12" db="EMBL/GenBank/DDBJ databases">
        <title>Complete sequence of Shewanella amazonensis SB2B.</title>
        <authorList>
            <consortium name="US DOE Joint Genome Institute"/>
            <person name="Copeland A."/>
            <person name="Lucas S."/>
            <person name="Lapidus A."/>
            <person name="Barry K."/>
            <person name="Detter J.C."/>
            <person name="Glavina del Rio T."/>
            <person name="Hammon N."/>
            <person name="Israni S."/>
            <person name="Dalin E."/>
            <person name="Tice H."/>
            <person name="Pitluck S."/>
            <person name="Munk A.C."/>
            <person name="Brettin T."/>
            <person name="Bruce D."/>
            <person name="Han C."/>
            <person name="Tapia R."/>
            <person name="Gilna P."/>
            <person name="Schmutz J."/>
            <person name="Larimer F."/>
            <person name="Land M."/>
            <person name="Hauser L."/>
            <person name="Kyrpides N."/>
            <person name="Mikhailova N."/>
            <person name="Fredrickson J."/>
            <person name="Richardson P."/>
        </authorList>
    </citation>
    <scope>NUCLEOTIDE SEQUENCE [LARGE SCALE GENOMIC DNA]</scope>
    <source>
        <strain>ATCC BAA-1098 / SB2B</strain>
    </source>
</reference>
<proteinExistence type="inferred from homology"/>
<name>LOLA_SHEAM</name>
<dbReference type="EMBL" id="CP000507">
    <property type="protein sequence ID" value="ABL99978.1"/>
    <property type="molecule type" value="Genomic_DNA"/>
</dbReference>
<dbReference type="RefSeq" id="WP_011759886.1">
    <property type="nucleotide sequence ID" value="NC_008700.1"/>
</dbReference>
<dbReference type="SMR" id="A1S6H2"/>
<dbReference type="STRING" id="326297.Sama_1773"/>
<dbReference type="KEGG" id="saz:Sama_1773"/>
<dbReference type="eggNOG" id="COG2834">
    <property type="taxonomic scope" value="Bacteria"/>
</dbReference>
<dbReference type="HOGENOM" id="CLU_087560_1_1_6"/>
<dbReference type="OrthoDB" id="9787361at2"/>
<dbReference type="Proteomes" id="UP000009175">
    <property type="component" value="Chromosome"/>
</dbReference>
<dbReference type="GO" id="GO:0030288">
    <property type="term" value="C:outer membrane-bounded periplasmic space"/>
    <property type="evidence" value="ECO:0007669"/>
    <property type="project" value="TreeGrafter"/>
</dbReference>
<dbReference type="GO" id="GO:0044874">
    <property type="term" value="P:lipoprotein localization to outer membrane"/>
    <property type="evidence" value="ECO:0007669"/>
    <property type="project" value="UniProtKB-UniRule"/>
</dbReference>
<dbReference type="GO" id="GO:0042953">
    <property type="term" value="P:lipoprotein transport"/>
    <property type="evidence" value="ECO:0007669"/>
    <property type="project" value="InterPro"/>
</dbReference>
<dbReference type="CDD" id="cd16325">
    <property type="entry name" value="LolA"/>
    <property type="match status" value="1"/>
</dbReference>
<dbReference type="Gene3D" id="2.50.20.10">
    <property type="entry name" value="Lipoprotein localisation LolA/LolB/LppX"/>
    <property type="match status" value="1"/>
</dbReference>
<dbReference type="HAMAP" id="MF_00240">
    <property type="entry name" value="LolA"/>
    <property type="match status" value="1"/>
</dbReference>
<dbReference type="InterPro" id="IPR029046">
    <property type="entry name" value="LolA/LolB/LppX"/>
</dbReference>
<dbReference type="InterPro" id="IPR004564">
    <property type="entry name" value="OM_lipoprot_carrier_LolA-like"/>
</dbReference>
<dbReference type="InterPro" id="IPR018323">
    <property type="entry name" value="OM_lipoprot_carrier_LolA_Pbac"/>
</dbReference>
<dbReference type="NCBIfam" id="TIGR00547">
    <property type="entry name" value="lolA"/>
    <property type="match status" value="1"/>
</dbReference>
<dbReference type="PANTHER" id="PTHR35869">
    <property type="entry name" value="OUTER-MEMBRANE LIPOPROTEIN CARRIER PROTEIN"/>
    <property type="match status" value="1"/>
</dbReference>
<dbReference type="PANTHER" id="PTHR35869:SF1">
    <property type="entry name" value="OUTER-MEMBRANE LIPOPROTEIN CARRIER PROTEIN"/>
    <property type="match status" value="1"/>
</dbReference>
<dbReference type="Pfam" id="PF03548">
    <property type="entry name" value="LolA"/>
    <property type="match status" value="1"/>
</dbReference>
<dbReference type="SUPFAM" id="SSF89392">
    <property type="entry name" value="Prokaryotic lipoproteins and lipoprotein localization factors"/>
    <property type="match status" value="1"/>
</dbReference>
<feature type="signal peptide" evidence="1">
    <location>
        <begin position="1"/>
        <end position="19"/>
    </location>
</feature>
<feature type="chain" id="PRO_5000205279" description="Outer-membrane lipoprotein carrier protein">
    <location>
        <begin position="20"/>
        <end position="203"/>
    </location>
</feature>
<protein>
    <recommendedName>
        <fullName evidence="1">Outer-membrane lipoprotein carrier protein</fullName>
    </recommendedName>
</protein>
<evidence type="ECO:0000255" key="1">
    <source>
        <dbReference type="HAMAP-Rule" id="MF_00240"/>
    </source>
</evidence>
<organism>
    <name type="scientific">Shewanella amazonensis (strain ATCC BAA-1098 / SB2B)</name>
    <dbReference type="NCBI Taxonomy" id="326297"/>
    <lineage>
        <taxon>Bacteria</taxon>
        <taxon>Pseudomonadati</taxon>
        <taxon>Pseudomonadota</taxon>
        <taxon>Gammaproteobacteria</taxon>
        <taxon>Alteromonadales</taxon>
        <taxon>Shewanellaceae</taxon>
        <taxon>Shewanella</taxon>
    </lineage>
</organism>